<dbReference type="EC" id="2.6.1.19"/>
<dbReference type="EC" id="2.6.1.22"/>
<dbReference type="EMBL" id="M84802">
    <property type="protein sequence ID" value="AAA96981.1"/>
    <property type="molecule type" value="mRNA"/>
</dbReference>
<dbReference type="RefSeq" id="NP_999428.1">
    <property type="nucleotide sequence ID" value="NM_214263.1"/>
</dbReference>
<dbReference type="PDB" id="1OHV">
    <property type="method" value="X-ray"/>
    <property type="resolution" value="2.30 A"/>
    <property type="chains" value="A/B/C/D=29-500"/>
</dbReference>
<dbReference type="PDB" id="1OHW">
    <property type="method" value="X-ray"/>
    <property type="resolution" value="2.30 A"/>
    <property type="chains" value="A/B/C/D=29-500"/>
</dbReference>
<dbReference type="PDB" id="1OHY">
    <property type="method" value="X-ray"/>
    <property type="resolution" value="2.80 A"/>
    <property type="chains" value="A/B/C/D=29-500"/>
</dbReference>
<dbReference type="PDB" id="4Y0D">
    <property type="method" value="X-ray"/>
    <property type="resolution" value="2.19 A"/>
    <property type="chains" value="A/B/C/D=39-500"/>
</dbReference>
<dbReference type="PDB" id="4Y0H">
    <property type="method" value="X-ray"/>
    <property type="resolution" value="1.63 A"/>
    <property type="chains" value="A/B/C/D=39-500"/>
</dbReference>
<dbReference type="PDB" id="4Y0I">
    <property type="method" value="X-ray"/>
    <property type="resolution" value="1.66 A"/>
    <property type="chains" value="A/B/C/D=39-499"/>
</dbReference>
<dbReference type="PDB" id="4ZSW">
    <property type="method" value="X-ray"/>
    <property type="resolution" value="1.70 A"/>
    <property type="chains" value="A/B/C/D=39-499"/>
</dbReference>
<dbReference type="PDB" id="4ZSY">
    <property type="method" value="X-ray"/>
    <property type="resolution" value="1.70 A"/>
    <property type="chains" value="A/B/C/D=39-499"/>
</dbReference>
<dbReference type="PDB" id="6B6G">
    <property type="method" value="X-ray"/>
    <property type="resolution" value="1.95 A"/>
    <property type="chains" value="A/B/C/D=39-500"/>
</dbReference>
<dbReference type="PDBsum" id="1OHV"/>
<dbReference type="PDBsum" id="1OHW"/>
<dbReference type="PDBsum" id="1OHY"/>
<dbReference type="PDBsum" id="4Y0D"/>
<dbReference type="PDBsum" id="4Y0H"/>
<dbReference type="PDBsum" id="4Y0I"/>
<dbReference type="PDBsum" id="4ZSW"/>
<dbReference type="PDBsum" id="4ZSY"/>
<dbReference type="PDBsum" id="6B6G"/>
<dbReference type="SMR" id="P80147"/>
<dbReference type="BioGRID" id="1149627">
    <property type="interactions" value="1"/>
</dbReference>
<dbReference type="FunCoup" id="P80147">
    <property type="interactions" value="814"/>
</dbReference>
<dbReference type="STRING" id="9823.ENSSSCP00000035621"/>
<dbReference type="BindingDB" id="P80147"/>
<dbReference type="ChEMBL" id="CHEMBL2266"/>
<dbReference type="PaxDb" id="9823-ENSSSCP00000008445"/>
<dbReference type="PeptideAtlas" id="P80147"/>
<dbReference type="Ensembl" id="ENSSSCT00015041462.1">
    <property type="protein sequence ID" value="ENSSSCP00015016382.1"/>
    <property type="gene ID" value="ENSSSCG00015030409.1"/>
</dbReference>
<dbReference type="Ensembl" id="ENSSSCT00030013900.1">
    <property type="protein sequence ID" value="ENSSSCP00030006205.1"/>
    <property type="gene ID" value="ENSSSCG00030010026.1"/>
</dbReference>
<dbReference type="Ensembl" id="ENSSSCT00035087217.1">
    <property type="protein sequence ID" value="ENSSSCP00035036388.1"/>
    <property type="gene ID" value="ENSSSCG00035064690.1"/>
</dbReference>
<dbReference type="Ensembl" id="ENSSSCT00045039444.1">
    <property type="protein sequence ID" value="ENSSSCP00045027448.1"/>
    <property type="gene ID" value="ENSSSCG00045022701.1"/>
</dbReference>
<dbReference type="Ensembl" id="ENSSSCT00050078286.1">
    <property type="protein sequence ID" value="ENSSSCP00050033681.1"/>
    <property type="gene ID" value="ENSSSCG00050057376.1"/>
</dbReference>
<dbReference type="Ensembl" id="ENSSSCT00060044527.1">
    <property type="protein sequence ID" value="ENSSSCP00060018992.1"/>
    <property type="gene ID" value="ENSSSCG00060032875.1"/>
</dbReference>
<dbReference type="Ensembl" id="ENSSSCT00065094756.1">
    <property type="protein sequence ID" value="ENSSSCP00065041447.1"/>
    <property type="gene ID" value="ENSSSCG00065068901.1"/>
</dbReference>
<dbReference type="Ensembl" id="ENSSSCT00090023802">
    <property type="protein sequence ID" value="ENSSSCP00090014605"/>
    <property type="gene ID" value="ENSSSCG00090013613"/>
</dbReference>
<dbReference type="GeneID" id="397500"/>
<dbReference type="KEGG" id="ssc:397500"/>
<dbReference type="CTD" id="18"/>
<dbReference type="eggNOG" id="KOG1405">
    <property type="taxonomic scope" value="Eukaryota"/>
</dbReference>
<dbReference type="HOGENOM" id="CLU_016922_12_1_1"/>
<dbReference type="InParanoid" id="P80147"/>
<dbReference type="OMA" id="GLMCAFD"/>
<dbReference type="OrthoDB" id="5419315at2759"/>
<dbReference type="BRENDA" id="2.6.1.19">
    <property type="organism ID" value="6170"/>
</dbReference>
<dbReference type="Reactome" id="R-SSC-916853">
    <property type="pathway name" value="Degradation of GABA"/>
</dbReference>
<dbReference type="SABIO-RK" id="P80147"/>
<dbReference type="ChiTaRS" id="ABAT">
    <property type="organism name" value="pig"/>
</dbReference>
<dbReference type="EvolutionaryTrace" id="P80147"/>
<dbReference type="PRO" id="PR:P80147"/>
<dbReference type="Proteomes" id="UP000008227">
    <property type="component" value="Unplaced"/>
</dbReference>
<dbReference type="Proteomes" id="UP000314985">
    <property type="component" value="Unplaced"/>
</dbReference>
<dbReference type="Proteomes" id="UP000694570">
    <property type="component" value="Unplaced"/>
</dbReference>
<dbReference type="Proteomes" id="UP000694571">
    <property type="component" value="Unplaced"/>
</dbReference>
<dbReference type="Proteomes" id="UP000694720">
    <property type="component" value="Unplaced"/>
</dbReference>
<dbReference type="Proteomes" id="UP000694722">
    <property type="component" value="Unplaced"/>
</dbReference>
<dbReference type="Proteomes" id="UP000694723">
    <property type="component" value="Unplaced"/>
</dbReference>
<dbReference type="Proteomes" id="UP000694724">
    <property type="component" value="Unplaced"/>
</dbReference>
<dbReference type="Proteomes" id="UP000694725">
    <property type="component" value="Unplaced"/>
</dbReference>
<dbReference type="Proteomes" id="UP000694726">
    <property type="component" value="Unplaced"/>
</dbReference>
<dbReference type="Proteomes" id="UP000694727">
    <property type="component" value="Unplaced"/>
</dbReference>
<dbReference type="Proteomes" id="UP000694728">
    <property type="component" value="Unplaced"/>
</dbReference>
<dbReference type="Bgee" id="ENSSSCG00000007909">
    <property type="expression patterns" value="Expressed in adult mammalian kidney and 45 other cell types or tissues"/>
</dbReference>
<dbReference type="ExpressionAtlas" id="P80147">
    <property type="expression patterns" value="baseline and differential"/>
</dbReference>
<dbReference type="GO" id="GO:0032144">
    <property type="term" value="C:4-aminobutyrate transaminase complex"/>
    <property type="evidence" value="ECO:0000314"/>
    <property type="project" value="UniProtKB"/>
</dbReference>
<dbReference type="GO" id="GO:0005829">
    <property type="term" value="C:cytosol"/>
    <property type="evidence" value="ECO:0000304"/>
    <property type="project" value="UniProtKB"/>
</dbReference>
<dbReference type="GO" id="GO:0005759">
    <property type="term" value="C:mitochondrial matrix"/>
    <property type="evidence" value="ECO:0000304"/>
    <property type="project" value="UniProtKB"/>
</dbReference>
<dbReference type="GO" id="GO:0005739">
    <property type="term" value="C:mitochondrion"/>
    <property type="evidence" value="ECO:0000250"/>
    <property type="project" value="UniProtKB"/>
</dbReference>
<dbReference type="GO" id="GO:0047298">
    <property type="term" value="F:(S)-3-amino-2-methylpropionate transaminase activity"/>
    <property type="evidence" value="ECO:0007669"/>
    <property type="project" value="UniProtKB-EC"/>
</dbReference>
<dbReference type="GO" id="GO:0051537">
    <property type="term" value="F:2 iron, 2 sulfur cluster binding"/>
    <property type="evidence" value="ECO:0007669"/>
    <property type="project" value="UniProtKB-KW"/>
</dbReference>
<dbReference type="GO" id="GO:0034386">
    <property type="term" value="F:4-aminobutyrate:2-oxoglutarate transaminase activity"/>
    <property type="evidence" value="ECO:0000315"/>
    <property type="project" value="UniProtKB"/>
</dbReference>
<dbReference type="GO" id="GO:0042802">
    <property type="term" value="F:identical protein binding"/>
    <property type="evidence" value="ECO:0000250"/>
    <property type="project" value="UniProtKB"/>
</dbReference>
<dbReference type="GO" id="GO:0046872">
    <property type="term" value="F:metal ion binding"/>
    <property type="evidence" value="ECO:0007669"/>
    <property type="project" value="UniProtKB-KW"/>
</dbReference>
<dbReference type="GO" id="GO:0042803">
    <property type="term" value="F:protein homodimerization activity"/>
    <property type="evidence" value="ECO:0000353"/>
    <property type="project" value="UniProtKB"/>
</dbReference>
<dbReference type="GO" id="GO:0030170">
    <property type="term" value="F:pyridoxal phosphate binding"/>
    <property type="evidence" value="ECO:0000314"/>
    <property type="project" value="UniProtKB"/>
</dbReference>
<dbReference type="GO" id="GO:0032145">
    <property type="term" value="F:succinate-semialdehyde dehydrogenase binding"/>
    <property type="evidence" value="ECO:0000314"/>
    <property type="project" value="UniProtKB"/>
</dbReference>
<dbReference type="GO" id="GO:0009450">
    <property type="term" value="P:gamma-aminobutyric acid catabolic process"/>
    <property type="evidence" value="ECO:0000315"/>
    <property type="project" value="UniProtKB"/>
</dbReference>
<dbReference type="GO" id="GO:0050877">
    <property type="term" value="P:nervous system process"/>
    <property type="evidence" value="ECO:0000250"/>
    <property type="project" value="UniProtKB"/>
</dbReference>
<dbReference type="CDD" id="cd00610">
    <property type="entry name" value="OAT_like"/>
    <property type="match status" value="1"/>
</dbReference>
<dbReference type="FunFam" id="3.40.640.10:FF:000029">
    <property type="entry name" value="4-aminobutyrate aminotransferase, mitochondrial"/>
    <property type="match status" value="1"/>
</dbReference>
<dbReference type="FunFam" id="3.90.1150.10:FF:000191">
    <property type="entry name" value="4-aminobutyrate aminotransferase, mitochondrial"/>
    <property type="match status" value="2"/>
</dbReference>
<dbReference type="Gene3D" id="3.90.1150.10">
    <property type="entry name" value="Aspartate Aminotransferase, domain 1"/>
    <property type="match status" value="1"/>
</dbReference>
<dbReference type="Gene3D" id="3.40.640.10">
    <property type="entry name" value="Type I PLP-dependent aspartate aminotransferase-like (Major domain)"/>
    <property type="match status" value="1"/>
</dbReference>
<dbReference type="InterPro" id="IPR004631">
    <property type="entry name" value="4NH2But_aminotransferase_euk"/>
</dbReference>
<dbReference type="InterPro" id="IPR005814">
    <property type="entry name" value="Aminotrans_3"/>
</dbReference>
<dbReference type="InterPro" id="IPR049704">
    <property type="entry name" value="Aminotrans_3_PPA_site"/>
</dbReference>
<dbReference type="InterPro" id="IPR015424">
    <property type="entry name" value="PyrdxlP-dep_Trfase"/>
</dbReference>
<dbReference type="InterPro" id="IPR015421">
    <property type="entry name" value="PyrdxlP-dep_Trfase_major"/>
</dbReference>
<dbReference type="InterPro" id="IPR015422">
    <property type="entry name" value="PyrdxlP-dep_Trfase_small"/>
</dbReference>
<dbReference type="NCBIfam" id="TIGR00699">
    <property type="entry name" value="GABAtrns_euk"/>
    <property type="match status" value="1"/>
</dbReference>
<dbReference type="PANTHER" id="PTHR43206:SF4">
    <property type="entry name" value="4-AMINOBUTYRATE AMINOTRANSFERASE, MITOCHONDRIAL"/>
    <property type="match status" value="1"/>
</dbReference>
<dbReference type="PANTHER" id="PTHR43206">
    <property type="entry name" value="AMINOTRANSFERASE"/>
    <property type="match status" value="1"/>
</dbReference>
<dbReference type="Pfam" id="PF00202">
    <property type="entry name" value="Aminotran_3"/>
    <property type="match status" value="1"/>
</dbReference>
<dbReference type="PIRSF" id="PIRSF000521">
    <property type="entry name" value="Transaminase_4ab_Lys_Orn"/>
    <property type="match status" value="1"/>
</dbReference>
<dbReference type="SUPFAM" id="SSF53383">
    <property type="entry name" value="PLP-dependent transferases"/>
    <property type="match status" value="1"/>
</dbReference>
<dbReference type="PROSITE" id="PS00600">
    <property type="entry name" value="AA_TRANSFER_CLASS_3"/>
    <property type="match status" value="1"/>
</dbReference>
<sequence length="500" mass="56620">MASVLLTRRLACSFRHNHRLLVPGWRHISQAAAKVDVEFDYDGPLMKTEVPGPRSRELMKQLNIIQNAEAVHFFCNYEESRGNYLVDVDGNRMLDLYSQISSIPIGYSHPALVKLVQQPQNVSTFINRPALGILPPENFVEKLRESLLSVAPKGMSQLITMACGSCSNENAFKTIFMWYRSKERGQSAFSKEELETCMINQAPGCPDYSILSFMGAFHGRTMGCLATTHSKAIHKIDIPSFDWPIAPFPRLKYPLEEFVKENQQEEARCLEEVEDLIVKYRKKKKTVAGIIVEPIQSEGGDNHASDDFFRKLRDISRKHGCAFLVDEVQTGGGSTGKFWAHEHWGLDDPADVMTFSKKMMTGGFFHKEEFRPNAPYRIFNTWLGDPSKNLLLAEVINIIKREDLLSNAAHAGKVLLTGLLDLQARYPQFISRVRGRGTFCSFDTPDESIRNKLISIARNKGVMLGGCGDKSIRFRPTLVFRDHHAHLFLNIFSDILADFK</sequence>
<comment type="function">
    <text evidence="2">Catalyzes the conversion of gamma-aminobutyrate and L-beta-aminoisobutyrate to succinate semialdehyde and methylmalonate semialdehyde, respectively. Can also convert delta-aminovalerate and beta-alanine.</text>
</comment>
<comment type="catalytic activity">
    <reaction evidence="2">
        <text>4-aminobutanoate + 2-oxoglutarate = succinate semialdehyde + L-glutamate</text>
        <dbReference type="Rhea" id="RHEA:23352"/>
        <dbReference type="ChEBI" id="CHEBI:16810"/>
        <dbReference type="ChEBI" id="CHEBI:29985"/>
        <dbReference type="ChEBI" id="CHEBI:57706"/>
        <dbReference type="ChEBI" id="CHEBI:59888"/>
        <dbReference type="EC" id="2.6.1.19"/>
    </reaction>
    <physiologicalReaction direction="left-to-right" evidence="2">
        <dbReference type="Rhea" id="RHEA:23353"/>
    </physiologicalReaction>
</comment>
<comment type="catalytic activity">
    <reaction evidence="2">
        <text>(S)-3-amino-2-methylpropanoate + 2-oxoglutarate = 2-methyl-3-oxopropanoate + L-glutamate</text>
        <dbReference type="Rhea" id="RHEA:13993"/>
        <dbReference type="ChEBI" id="CHEBI:16810"/>
        <dbReference type="ChEBI" id="CHEBI:29985"/>
        <dbReference type="ChEBI" id="CHEBI:57700"/>
        <dbReference type="ChEBI" id="CHEBI:58655"/>
        <dbReference type="EC" id="2.6.1.22"/>
    </reaction>
    <physiologicalReaction direction="left-to-right" evidence="2">
        <dbReference type="Rhea" id="RHEA:13994"/>
    </physiologicalReaction>
</comment>
<comment type="cofactor">
    <cofactor evidence="4 5">
        <name>pyridoxal 5'-phosphate</name>
        <dbReference type="ChEBI" id="CHEBI:597326"/>
    </cofactor>
    <cofactor evidence="5">
        <name>[2Fe-2S] cluster</name>
        <dbReference type="ChEBI" id="CHEBI:190135"/>
    </cofactor>
    <text evidence="5">Binds 1 [2Fe-2S] cluster per homodimer.</text>
</comment>
<comment type="subunit">
    <text>Homodimer; disulfide-linked.</text>
</comment>
<comment type="subcellular location">
    <subcellularLocation>
        <location>Mitochondrion matrix</location>
    </subcellularLocation>
</comment>
<comment type="similarity">
    <text evidence="7">Belongs to the class-III pyridoxal-phosphate-dependent aminotransferase family.</text>
</comment>
<accession>P80147</accession>
<accession>P27820</accession>
<evidence type="ECO:0000250" key="1"/>
<evidence type="ECO:0000250" key="2">
    <source>
        <dbReference type="UniProtKB" id="P50554"/>
    </source>
</evidence>
<evidence type="ECO:0000250" key="3">
    <source>
        <dbReference type="UniProtKB" id="P61922"/>
    </source>
</evidence>
<evidence type="ECO:0000269" key="4">
    <source>
    </source>
</evidence>
<evidence type="ECO:0000269" key="5">
    <source>
    </source>
</evidence>
<evidence type="ECO:0000269" key="6">
    <source>
    </source>
</evidence>
<evidence type="ECO:0000305" key="7"/>
<evidence type="ECO:0000305" key="8">
    <source>
    </source>
</evidence>
<evidence type="ECO:0007829" key="9">
    <source>
        <dbReference type="PDB" id="4Y0H"/>
    </source>
</evidence>
<evidence type="ECO:0007829" key="10">
    <source>
        <dbReference type="PDB" id="4ZSW"/>
    </source>
</evidence>
<name>GABT_PIG</name>
<reference key="1">
    <citation type="journal article" date="1992" name="J. Biol. Chem.">
        <title>Brain 4-aminobutyrate aminotransferase. Isolation and sequence of a cDNA encoding the enzyme.</title>
        <authorList>
            <person name="Kwon O.S."/>
            <person name="Park J."/>
            <person name="Churchich J.E."/>
        </authorList>
    </citation>
    <scope>NUCLEOTIDE SEQUENCE [MRNA]</scope>
    <source>
        <tissue>Brain</tissue>
    </source>
</reference>
<reference key="2">
    <citation type="journal article" date="1992" name="Eur. J. Biochem.">
        <title>Protein structure of pig liver 4-aminobutyrate aminotransferase and comparison with a cDNA-deduced sequence.</title>
        <authorList>
            <person name="de Biase D."/>
            <person name="Maras B."/>
            <person name="Bossa F."/>
            <person name="Barra D."/>
            <person name="John R.A."/>
        </authorList>
    </citation>
    <scope>PROTEIN SEQUENCE OF 29-500</scope>
    <source>
        <tissue>Liver</tissue>
    </source>
</reference>
<reference key="3">
    <citation type="journal article" date="1999" name="Biochemistry">
        <title>Crystal structure of GABA-aminotransferase, a target for antiepileptic drug therapy.</title>
        <authorList>
            <person name="Storici P."/>
            <person name="Capitani G."/>
            <person name="De Biase D."/>
            <person name="Moser M."/>
            <person name="John R.A."/>
            <person name="Jansonius J.N."/>
            <person name="Schirmer T."/>
        </authorList>
    </citation>
    <scope>X-RAY CRYSTALLOGRAPHY (3.0 ANGSTROMS)</scope>
    <scope>PYRIDOXAL PHOSPHATE AT LYS-357</scope>
    <scope>SUBUNIT</scope>
    <source>
        <tissue>Liver</tissue>
    </source>
</reference>
<reference key="4">
    <citation type="journal article" date="2004" name="J. Biol. Chem.">
        <title>Structures of gamma-aminobutyric acid (GABA) aminotransferase, a pyridoxal 5'-phosphate, and [2Fe-2S] cluster-containing enzyme, complexed with gamma-ethynyl-GABA and with the antiepilepsy drug vigabatrin.</title>
        <authorList>
            <person name="Storici P."/>
            <person name="De Biase D."/>
            <person name="Bossa F."/>
            <person name="Bruno S."/>
            <person name="Mozzarelli A."/>
            <person name="Peneff C."/>
            <person name="Silverman R.B."/>
            <person name="Schirmer T."/>
        </authorList>
    </citation>
    <scope>X-RAY CRYSTALLOGRAPHY (2.30 ANGSTROMS) IN COMPLEX WITH SUBSTRATE ANALOG</scope>
    <scope>PYRIDOXAL PHOSPHATE AT LYS-357</scope>
    <scope>COFACTOR</scope>
</reference>
<organism>
    <name type="scientific">Sus scrofa</name>
    <name type="common">Pig</name>
    <dbReference type="NCBI Taxonomy" id="9823"/>
    <lineage>
        <taxon>Eukaryota</taxon>
        <taxon>Metazoa</taxon>
        <taxon>Chordata</taxon>
        <taxon>Craniata</taxon>
        <taxon>Vertebrata</taxon>
        <taxon>Euteleostomi</taxon>
        <taxon>Mammalia</taxon>
        <taxon>Eutheria</taxon>
        <taxon>Laurasiatheria</taxon>
        <taxon>Artiodactyla</taxon>
        <taxon>Suina</taxon>
        <taxon>Suidae</taxon>
        <taxon>Sus</taxon>
    </lineage>
</organism>
<feature type="transit peptide" description="Mitochondrion" evidence="6">
    <location>
        <begin position="1"/>
        <end position="28"/>
    </location>
</feature>
<feature type="chain" id="PRO_0000001251" description="4-aminobutyrate aminotransferase, mitochondrial">
    <location>
        <begin position="29"/>
        <end position="500"/>
    </location>
</feature>
<feature type="binding site" evidence="5">
    <location>
        <position position="163"/>
    </location>
    <ligand>
        <name>[2Fe-2S] cluster</name>
        <dbReference type="ChEBI" id="CHEBI:190135"/>
        <note>ligand shared between dimeric partners</note>
    </ligand>
</feature>
<feature type="binding site" description="in other chain" evidence="4">
    <location>
        <begin position="164"/>
        <end position="165"/>
    </location>
    <ligand>
        <name>pyridoxal 5'-phosphate</name>
        <dbReference type="ChEBI" id="CHEBI:597326"/>
        <note>ligand shared between dimeric partners</note>
    </ligand>
</feature>
<feature type="binding site" evidence="5">
    <location>
        <position position="166"/>
    </location>
    <ligand>
        <name>[2Fe-2S] cluster</name>
        <dbReference type="ChEBI" id="CHEBI:190135"/>
        <note>ligand shared between dimeric partners</note>
    </ligand>
</feature>
<feature type="binding site" evidence="5 8">
    <location>
        <position position="220"/>
    </location>
    <ligand>
        <name>substrate</name>
    </ligand>
</feature>
<feature type="binding site" evidence="4 5">
    <location>
        <position position="381"/>
    </location>
    <ligand>
        <name>pyridoxal 5'-phosphate</name>
        <dbReference type="ChEBI" id="CHEBI:597326"/>
        <note>ligand shared between dimeric partners</note>
    </ligand>
</feature>
<feature type="modified residue" description="N6-succinyllysine" evidence="3">
    <location>
        <position position="231"/>
    </location>
</feature>
<feature type="modified residue" description="N6-acetyllysine; alternate" evidence="3">
    <location>
        <position position="252"/>
    </location>
</feature>
<feature type="modified residue" description="N6-succinyllysine; alternate" evidence="3">
    <location>
        <position position="252"/>
    </location>
</feature>
<feature type="modified residue" description="N6-acetyllysine" evidence="3">
    <location>
        <position position="279"/>
    </location>
</feature>
<feature type="modified residue" description="N6-acetyllysine" evidence="3">
    <location>
        <position position="318"/>
    </location>
</feature>
<feature type="modified residue" description="N6-(pyridoxal phosphate)lysine" evidence="4">
    <location>
        <position position="357"/>
    </location>
</feature>
<feature type="modified residue" description="N6-acetyllysine; alternate" evidence="3">
    <location>
        <position position="413"/>
    </location>
</feature>
<feature type="modified residue" description="N6-succinyllysine; alternate" evidence="3">
    <location>
        <position position="413"/>
    </location>
</feature>
<feature type="modified residue" description="N6-acetyllysine" evidence="3">
    <location>
        <position position="452"/>
    </location>
</feature>
<feature type="modified residue" description="N6-acetyllysine" evidence="3">
    <location>
        <position position="470"/>
    </location>
</feature>
<feature type="disulfide bond" description="Interchain" evidence="1">
    <location>
        <position position="321"/>
    </location>
</feature>
<feature type="sequence conflict" description="In Ref. 1; AAA96981." evidence="7" ref="1">
    <original>I</original>
    <variation>N</variation>
    <location>
        <position position="454"/>
    </location>
</feature>
<feature type="helix" evidence="9">
    <location>
        <begin position="53"/>
        <end position="65"/>
    </location>
</feature>
<feature type="helix" evidence="9">
    <location>
        <begin position="77"/>
        <end position="79"/>
    </location>
</feature>
<feature type="strand" evidence="9">
    <location>
        <begin position="84"/>
        <end position="87"/>
    </location>
</feature>
<feature type="strand" evidence="9">
    <location>
        <begin position="92"/>
        <end position="97"/>
    </location>
</feature>
<feature type="helix" evidence="9">
    <location>
        <begin position="98"/>
        <end position="101"/>
    </location>
</feature>
<feature type="helix" evidence="9">
    <location>
        <begin position="110"/>
        <end position="117"/>
    </location>
</feature>
<feature type="helix" evidence="9">
    <location>
        <begin position="119"/>
        <end position="121"/>
    </location>
</feature>
<feature type="helix" evidence="9">
    <location>
        <begin position="122"/>
        <end position="126"/>
    </location>
</feature>
<feature type="turn" evidence="9">
    <location>
        <begin position="131"/>
        <end position="133"/>
    </location>
</feature>
<feature type="helix" evidence="9">
    <location>
        <begin position="139"/>
        <end position="145"/>
    </location>
</feature>
<feature type="helix" evidence="9">
    <location>
        <begin position="147"/>
        <end position="150"/>
    </location>
</feature>
<feature type="strand" evidence="9">
    <location>
        <begin position="157"/>
        <end position="163"/>
    </location>
</feature>
<feature type="helix" evidence="9">
    <location>
        <begin position="164"/>
        <end position="184"/>
    </location>
</feature>
<feature type="helix" evidence="9">
    <location>
        <begin position="191"/>
        <end position="197"/>
    </location>
</feature>
<feature type="turn" evidence="9">
    <location>
        <begin position="198"/>
        <end position="200"/>
    </location>
</feature>
<feature type="turn" evidence="9">
    <location>
        <begin position="202"/>
        <end position="204"/>
    </location>
</feature>
<feature type="strand" evidence="9">
    <location>
        <begin position="209"/>
        <end position="213"/>
    </location>
</feature>
<feature type="helix" evidence="9">
    <location>
        <begin position="222"/>
        <end position="227"/>
    </location>
</feature>
<feature type="helix" evidence="9">
    <location>
        <begin position="232"/>
        <end position="235"/>
    </location>
</feature>
<feature type="helix" evidence="9">
    <location>
        <begin position="255"/>
        <end position="257"/>
    </location>
</feature>
<feature type="helix" evidence="9">
    <location>
        <begin position="259"/>
        <end position="282"/>
    </location>
</feature>
<feature type="strand" evidence="9">
    <location>
        <begin position="287"/>
        <end position="292"/>
    </location>
</feature>
<feature type="strand" evidence="9">
    <location>
        <begin position="294"/>
        <end position="296"/>
    </location>
</feature>
<feature type="turn" evidence="9">
    <location>
        <begin position="298"/>
        <end position="300"/>
    </location>
</feature>
<feature type="helix" evidence="9">
    <location>
        <begin position="306"/>
        <end position="318"/>
    </location>
</feature>
<feature type="strand" evidence="9">
    <location>
        <begin position="322"/>
        <end position="326"/>
    </location>
</feature>
<feature type="turn" evidence="9">
    <location>
        <begin position="328"/>
        <end position="335"/>
    </location>
</feature>
<feature type="strand" evidence="9">
    <location>
        <begin position="336"/>
        <end position="339"/>
    </location>
</feature>
<feature type="helix" evidence="9">
    <location>
        <begin position="340"/>
        <end position="344"/>
    </location>
</feature>
<feature type="strand" evidence="9">
    <location>
        <begin position="351"/>
        <end position="355"/>
    </location>
</feature>
<feature type="helix" evidence="9">
    <location>
        <begin position="357"/>
        <end position="359"/>
    </location>
</feature>
<feature type="strand" evidence="9">
    <location>
        <begin position="360"/>
        <end position="366"/>
    </location>
</feature>
<feature type="helix" evidence="9">
    <location>
        <begin position="368"/>
        <end position="370"/>
    </location>
</feature>
<feature type="strand" evidence="9">
    <location>
        <begin position="373"/>
        <end position="378"/>
    </location>
</feature>
<feature type="strand" evidence="10">
    <location>
        <begin position="381"/>
        <end position="384"/>
    </location>
</feature>
<feature type="helix" evidence="9">
    <location>
        <begin position="386"/>
        <end position="401"/>
    </location>
</feature>
<feature type="helix" evidence="9">
    <location>
        <begin position="404"/>
        <end position="425"/>
    </location>
</feature>
<feature type="turn" evidence="9">
    <location>
        <begin position="427"/>
        <end position="429"/>
    </location>
</feature>
<feature type="strand" evidence="9">
    <location>
        <begin position="431"/>
        <end position="436"/>
    </location>
</feature>
<feature type="strand" evidence="9">
    <location>
        <begin position="439"/>
        <end position="443"/>
    </location>
</feature>
<feature type="helix" evidence="9">
    <location>
        <begin position="447"/>
        <end position="459"/>
    </location>
</feature>
<feature type="strand" evidence="9">
    <location>
        <begin position="465"/>
        <end position="467"/>
    </location>
</feature>
<feature type="turn" evidence="9">
    <location>
        <begin position="468"/>
        <end position="470"/>
    </location>
</feature>
<feature type="strand" evidence="9">
    <location>
        <begin position="471"/>
        <end position="473"/>
    </location>
</feature>
<feature type="helix" evidence="9">
    <location>
        <begin position="482"/>
        <end position="498"/>
    </location>
</feature>
<gene>
    <name type="primary">ABAT</name>
    <name type="synonym">GABAT</name>
</gene>
<proteinExistence type="evidence at protein level"/>
<keyword id="KW-0001">2Fe-2S</keyword>
<keyword id="KW-0002">3D-structure</keyword>
<keyword id="KW-0007">Acetylation</keyword>
<keyword id="KW-0032">Aminotransferase</keyword>
<keyword id="KW-0903">Direct protein sequencing</keyword>
<keyword id="KW-1015">Disulfide bond</keyword>
<keyword id="KW-0408">Iron</keyword>
<keyword id="KW-0411">Iron-sulfur</keyword>
<keyword id="KW-0479">Metal-binding</keyword>
<keyword id="KW-0496">Mitochondrion</keyword>
<keyword id="KW-0531">Neurotransmitter degradation</keyword>
<keyword id="KW-0663">Pyridoxal phosphate</keyword>
<keyword id="KW-1185">Reference proteome</keyword>
<keyword id="KW-0808">Transferase</keyword>
<keyword id="KW-0809">Transit peptide</keyword>
<protein>
    <recommendedName>
        <fullName>4-aminobutyrate aminotransferase, mitochondrial</fullName>
        <ecNumber>2.6.1.19</ecNumber>
    </recommendedName>
    <alternativeName>
        <fullName>(S)-3-amino-2-methylpropionate transaminase</fullName>
        <ecNumber>2.6.1.22</ecNumber>
    </alternativeName>
    <alternativeName>
        <fullName>GABA aminotransferase</fullName>
        <shortName>GABA-AT</shortName>
    </alternativeName>
    <alternativeName>
        <fullName>Gamma-amino-N-butyrate transaminase</fullName>
        <shortName>GABA transaminase</shortName>
        <shortName>GABA-T</shortName>
    </alternativeName>
    <alternativeName>
        <fullName>L-AIBAT</fullName>
    </alternativeName>
</protein>